<gene>
    <name type="primary">Slc15a3</name>
    <name evidence="6" type="synonym">Pht2</name>
</gene>
<evidence type="ECO:0000250" key="1">
    <source>
        <dbReference type="UniProtKB" id="Q8BPX9"/>
    </source>
</evidence>
<evidence type="ECO:0000250" key="2">
    <source>
        <dbReference type="UniProtKB" id="Q8IY34"/>
    </source>
</evidence>
<evidence type="ECO:0000255" key="3"/>
<evidence type="ECO:0000256" key="4">
    <source>
        <dbReference type="SAM" id="MobiDB-lite"/>
    </source>
</evidence>
<evidence type="ECO:0000269" key="5">
    <source>
    </source>
</evidence>
<evidence type="ECO:0000303" key="6">
    <source>
    </source>
</evidence>
<evidence type="ECO:0000305" key="7"/>
<evidence type="ECO:0000305" key="8">
    <source>
    </source>
</evidence>
<keyword id="KW-0967">Endosome</keyword>
<keyword id="KW-0325">Glycoprotein</keyword>
<keyword id="KW-0391">Immunity</keyword>
<keyword id="KW-0399">Innate immunity</keyword>
<keyword id="KW-0458">Lysosome</keyword>
<keyword id="KW-0472">Membrane</keyword>
<keyword id="KW-0571">Peptide transport</keyword>
<keyword id="KW-0653">Protein transport</keyword>
<keyword id="KW-1185">Reference proteome</keyword>
<keyword id="KW-0769">Symport</keyword>
<keyword id="KW-0812">Transmembrane</keyword>
<keyword id="KW-1133">Transmembrane helix</keyword>
<keyword id="KW-0813">Transport</keyword>
<feature type="chain" id="PRO_0000295914" description="Solute carrier family 15 member 3">
    <location>
        <begin position="1"/>
        <end position="582"/>
    </location>
</feature>
<feature type="transmembrane region" description="Helical" evidence="3">
    <location>
        <begin position="33"/>
        <end position="53"/>
    </location>
</feature>
<feature type="transmembrane region" description="Helical" evidence="3">
    <location>
        <begin position="77"/>
        <end position="97"/>
    </location>
</feature>
<feature type="transmembrane region" description="Helical" evidence="3">
    <location>
        <begin position="102"/>
        <end position="122"/>
    </location>
</feature>
<feature type="transmembrane region" description="Helical" evidence="3">
    <location>
        <begin position="155"/>
        <end position="175"/>
    </location>
</feature>
<feature type="transmembrane region" description="Helical" evidence="3">
    <location>
        <begin position="201"/>
        <end position="221"/>
    </location>
</feature>
<feature type="transmembrane region" description="Helical" evidence="3">
    <location>
        <begin position="232"/>
        <end position="252"/>
    </location>
</feature>
<feature type="transmembrane region" description="Helical" evidence="3">
    <location>
        <begin position="312"/>
        <end position="332"/>
    </location>
</feature>
<feature type="transmembrane region" description="Helical" evidence="3">
    <location>
        <begin position="371"/>
        <end position="391"/>
    </location>
</feature>
<feature type="transmembrane region" description="Helical" evidence="3">
    <location>
        <begin position="409"/>
        <end position="429"/>
    </location>
</feature>
<feature type="transmembrane region" description="Helical" evidence="3">
    <location>
        <begin position="466"/>
        <end position="485"/>
    </location>
</feature>
<feature type="transmembrane region" description="Helical" evidence="3">
    <location>
        <begin position="498"/>
        <end position="518"/>
    </location>
</feature>
<feature type="transmembrane region" description="Helical" evidence="3">
    <location>
        <begin position="541"/>
        <end position="561"/>
    </location>
</feature>
<feature type="region of interest" description="Disordered" evidence="4">
    <location>
        <begin position="1"/>
        <end position="20"/>
    </location>
</feature>
<feature type="glycosylation site" description="N-linked (GlcNAc...) asparagine" evidence="3">
    <location>
        <position position="178"/>
    </location>
</feature>
<feature type="glycosylation site" description="N-linked (GlcNAc...) asparagine" evidence="3">
    <location>
        <position position="223"/>
    </location>
</feature>
<feature type="glycosylation site" description="N-linked (GlcNAc...) asparagine" evidence="3">
    <location>
        <position position="357"/>
    </location>
</feature>
<feature type="glycosylation site" description="N-linked (GlcNAc...) asparagine" evidence="3">
    <location>
        <position position="440"/>
    </location>
</feature>
<feature type="glycosylation site" description="N-linked (GlcNAc...) asparagine" evidence="3">
    <location>
        <position position="575"/>
    </location>
</feature>
<protein>
    <recommendedName>
        <fullName>Solute carrier family 15 member 3</fullName>
    </recommendedName>
    <alternativeName>
        <fullName>Peptide transporter 3</fullName>
    </alternativeName>
    <alternativeName>
        <fullName evidence="6">Peptide/histidine transporter 2</fullName>
    </alternativeName>
</protein>
<proteinExistence type="evidence at transcript level"/>
<name>S15A3_RAT</name>
<dbReference type="EMBL" id="AB026665">
    <property type="protein sequence ID" value="BAB43942.1"/>
    <property type="molecule type" value="mRNA"/>
</dbReference>
<dbReference type="RefSeq" id="NP_647557.1">
    <property type="nucleotide sequence ID" value="NM_139341.1"/>
</dbReference>
<dbReference type="RefSeq" id="XP_017444273.1">
    <property type="nucleotide sequence ID" value="XM_017588784.1"/>
</dbReference>
<dbReference type="RefSeq" id="XP_063137036.1">
    <property type="nucleotide sequence ID" value="XM_063280966.1"/>
</dbReference>
<dbReference type="SMR" id="Q924V4"/>
<dbReference type="FunCoup" id="Q924V4">
    <property type="interactions" value="152"/>
</dbReference>
<dbReference type="STRING" id="10116.ENSRNOP00000034275"/>
<dbReference type="GlyCosmos" id="Q924V4">
    <property type="glycosylation" value="5 sites, No reported glycans"/>
</dbReference>
<dbReference type="GlyGen" id="Q924V4">
    <property type="glycosylation" value="5 sites"/>
</dbReference>
<dbReference type="PhosphoSitePlus" id="Q924V4"/>
<dbReference type="PaxDb" id="10116-ENSRNOP00000034275"/>
<dbReference type="Ensembl" id="ENSRNOT00000029443.4">
    <property type="protein sequence ID" value="ENSRNOP00000034275.2"/>
    <property type="gene ID" value="ENSRNOG00000021644.4"/>
</dbReference>
<dbReference type="GeneID" id="246239"/>
<dbReference type="KEGG" id="rno:246239"/>
<dbReference type="UCSC" id="RGD:628663">
    <property type="organism name" value="rat"/>
</dbReference>
<dbReference type="AGR" id="RGD:628663"/>
<dbReference type="CTD" id="51296"/>
<dbReference type="RGD" id="628663">
    <property type="gene designation" value="Slc15a3"/>
</dbReference>
<dbReference type="eggNOG" id="KOG1237">
    <property type="taxonomic scope" value="Eukaryota"/>
</dbReference>
<dbReference type="GeneTree" id="ENSGT00940000161889"/>
<dbReference type="HOGENOM" id="CLU_009313_6_1_1"/>
<dbReference type="InParanoid" id="Q924V4"/>
<dbReference type="OMA" id="WMHGAEG"/>
<dbReference type="OrthoDB" id="8904098at2759"/>
<dbReference type="PhylomeDB" id="Q924V4"/>
<dbReference type="TreeFam" id="TF330897"/>
<dbReference type="Reactome" id="R-RNO-427975">
    <property type="pathway name" value="Proton/oligopeptide cotransporters"/>
</dbReference>
<dbReference type="PRO" id="PR:Q924V4"/>
<dbReference type="Proteomes" id="UP000002494">
    <property type="component" value="Chromosome 1"/>
</dbReference>
<dbReference type="Bgee" id="ENSRNOG00000021644">
    <property type="expression patterns" value="Expressed in thymus and 18 other cell types or tissues"/>
</dbReference>
<dbReference type="GO" id="GO:0010008">
    <property type="term" value="C:endosome membrane"/>
    <property type="evidence" value="ECO:0000250"/>
    <property type="project" value="UniProtKB"/>
</dbReference>
<dbReference type="GO" id="GO:0005765">
    <property type="term" value="C:lysosomal membrane"/>
    <property type="evidence" value="ECO:0000314"/>
    <property type="project" value="RGD"/>
</dbReference>
<dbReference type="GO" id="GO:0071916">
    <property type="term" value="F:dipeptide transmembrane transporter activity"/>
    <property type="evidence" value="ECO:0000250"/>
    <property type="project" value="UniProtKB"/>
</dbReference>
<dbReference type="GO" id="GO:0015647">
    <property type="term" value="F:peptidoglycan transmembrane transporter activity"/>
    <property type="evidence" value="ECO:0000250"/>
    <property type="project" value="UniProtKB"/>
</dbReference>
<dbReference type="GO" id="GO:0005427">
    <property type="term" value="F:proton-dependent oligopeptide secondary active transmembrane transporter activity"/>
    <property type="evidence" value="ECO:0000304"/>
    <property type="project" value="RGD"/>
</dbReference>
<dbReference type="GO" id="GO:0015293">
    <property type="term" value="F:symporter activity"/>
    <property type="evidence" value="ECO:0007669"/>
    <property type="project" value="UniProtKB-KW"/>
</dbReference>
<dbReference type="GO" id="GO:0140206">
    <property type="term" value="P:dipeptide import across plasma membrane"/>
    <property type="evidence" value="ECO:0000250"/>
    <property type="project" value="UniProtKB"/>
</dbReference>
<dbReference type="GO" id="GO:0045087">
    <property type="term" value="P:innate immune response"/>
    <property type="evidence" value="ECO:0007669"/>
    <property type="project" value="UniProtKB-KW"/>
</dbReference>
<dbReference type="GO" id="GO:0015835">
    <property type="term" value="P:peptidoglycan transport"/>
    <property type="evidence" value="ECO:0000250"/>
    <property type="project" value="UniProtKB"/>
</dbReference>
<dbReference type="GO" id="GO:0070434">
    <property type="term" value="P:positive regulation of nucleotide-binding oligomerization domain containing 2 signaling pathway"/>
    <property type="evidence" value="ECO:0000250"/>
    <property type="project" value="UniProtKB"/>
</dbReference>
<dbReference type="GO" id="GO:0030163">
    <property type="term" value="P:protein catabolic process"/>
    <property type="evidence" value="ECO:0000303"/>
    <property type="project" value="RGD"/>
</dbReference>
<dbReference type="GO" id="GO:0015031">
    <property type="term" value="P:protein transport"/>
    <property type="evidence" value="ECO:0007669"/>
    <property type="project" value="UniProtKB-KW"/>
</dbReference>
<dbReference type="FunFam" id="1.20.1250.20:FF:000307">
    <property type="entry name" value="Solute carrier family 15 member 3"/>
    <property type="match status" value="1"/>
</dbReference>
<dbReference type="Gene3D" id="1.20.1250.20">
    <property type="entry name" value="MFS general substrate transporter like domains"/>
    <property type="match status" value="1"/>
</dbReference>
<dbReference type="InterPro" id="IPR036259">
    <property type="entry name" value="MFS_trans_sf"/>
</dbReference>
<dbReference type="InterPro" id="IPR000109">
    <property type="entry name" value="POT_fam"/>
</dbReference>
<dbReference type="InterPro" id="IPR018456">
    <property type="entry name" value="PTR2_symporter_CS"/>
</dbReference>
<dbReference type="PANTHER" id="PTHR11654">
    <property type="entry name" value="OLIGOPEPTIDE TRANSPORTER-RELATED"/>
    <property type="match status" value="1"/>
</dbReference>
<dbReference type="Pfam" id="PF00854">
    <property type="entry name" value="PTR2"/>
    <property type="match status" value="1"/>
</dbReference>
<dbReference type="SUPFAM" id="SSF103473">
    <property type="entry name" value="MFS general substrate transporter"/>
    <property type="match status" value="1"/>
</dbReference>
<dbReference type="PROSITE" id="PS01023">
    <property type="entry name" value="PTR2_2"/>
    <property type="match status" value="1"/>
</dbReference>
<sequence length="582" mass="64593">MSALRAEQQPSRSGERQPLVAQGRWGPRRWRRTAAAAVLLVEMLERAAFFGVTSNLVLYLNSLNFNWDGEHASRATLLFLGASYLLAPVGGWLADVYLGRFLAISLSLLLYLAATGLLLTTITDDGRRSFCGEMPELPLKPACPSANCQGSWSSPYCATTLYLVLLLLALAASSVRSNLTSFGADQVMDLGRDATRRFFNWFYWSINLGAILSLLVVAFIEQNISFLQGYSIIVGLVGLAFFIFLIATPVFITKPPTGSQVSSMLNLAFQNCCPGWQWWRRPSSRNSEGAHLLPDQRSNQPGPSPQEDMANFQVLLKVLPVMVTLVPYWMVYFQMQSTYVLQGLHLHIPNIFRTNPNISLPLRSDSSNYRIPEAWLLLANVAVILILVPVKDHLIDPLLLRCKLLPSALQKMALGMFFGFTSIIVAGVLEKERLQYIAANQTVPQLIGKDLYYAAPLSIWWQIPQYLLIGISEIFASIPGLEFAYSEAPRSMQGAIMGIFFCLSGVGSLLGSGLVALLSLPGGWMYCPKDFGNINNCRMDLYFFLLAGIQAVTAVLFLWIAGRYERTRQDPDSQNSTSRVRG</sequence>
<reference key="1">
    <citation type="journal article" date="2001" name="Biochem. J.">
        <title>Cloning of a lymphatic peptide/histidine transporter.</title>
        <authorList>
            <person name="Sakata K."/>
            <person name="Yamashita T."/>
            <person name="Maeda M."/>
            <person name="Moriyama Y."/>
            <person name="Shimada S."/>
            <person name="Tohyama M."/>
        </authorList>
    </citation>
    <scope>NUCLEOTIDE SEQUENCE [MRNA]</scope>
    <scope>FUNCTION</scope>
    <scope>TRANSPORTER ACTIVITY</scope>
    <scope>SUBCELLULAR LOCATION</scope>
    <scope>TISSUE SPECIFICITY</scope>
</reference>
<organism>
    <name type="scientific">Rattus norvegicus</name>
    <name type="common">Rat</name>
    <dbReference type="NCBI Taxonomy" id="10116"/>
    <lineage>
        <taxon>Eukaryota</taxon>
        <taxon>Metazoa</taxon>
        <taxon>Chordata</taxon>
        <taxon>Craniata</taxon>
        <taxon>Vertebrata</taxon>
        <taxon>Euteleostomi</taxon>
        <taxon>Mammalia</taxon>
        <taxon>Eutheria</taxon>
        <taxon>Euarchontoglires</taxon>
        <taxon>Glires</taxon>
        <taxon>Rodentia</taxon>
        <taxon>Myomorpha</taxon>
        <taxon>Muroidea</taxon>
        <taxon>Muridae</taxon>
        <taxon>Murinae</taxon>
        <taxon>Rattus</taxon>
    </lineage>
</organism>
<accession>Q924V4</accession>
<comment type="function">
    <text evidence="1 2 5">Proton-coupled amino-acid transporter that transports free histidine and certain di- and tripeptides, and is involved in innate immune response (PubMed:11336635). Also able to transport carnosine (By similarity). Involved in the detection of microbial pathogens by toll-like receptors (TLRs) and NOD-like receptors (NLRs), probably by mediating transport of bacterial peptidoglycans across the endolysosomal membrane: catalyzes the transport of certain bacterial peptidoglycans, such as muramyl dipeptide (MDP), the NOD2 ligand (By similarity).</text>
</comment>
<comment type="catalytic activity">
    <reaction evidence="1">
        <text>N-acetyl-D-muramoyl-L-alanyl-D-isoglutamine(out) + n H(+)(out) = N-acetyl-D-muramoyl-L-alanyl-D-isoglutamine(in) + n H(+)(in)</text>
        <dbReference type="Rhea" id="RHEA:76371"/>
        <dbReference type="ChEBI" id="CHEBI:15378"/>
        <dbReference type="ChEBI" id="CHEBI:155830"/>
    </reaction>
    <physiologicalReaction direction="left-to-right" evidence="1">
        <dbReference type="Rhea" id="RHEA:76372"/>
    </physiologicalReaction>
</comment>
<comment type="catalytic activity">
    <reaction evidence="2">
        <text>glycylglycylglycine(out) + n H(+)(out) = glycylglycylglycine(in) + n H(+)(in)</text>
        <dbReference type="Rhea" id="RHEA:76391"/>
        <dbReference type="ChEBI" id="CHEBI:15378"/>
        <dbReference type="ChEBI" id="CHEBI:195214"/>
    </reaction>
    <physiologicalReaction direction="left-to-right" evidence="2">
        <dbReference type="Rhea" id="RHEA:76392"/>
    </physiologicalReaction>
</comment>
<comment type="catalytic activity">
    <reaction evidence="2">
        <text>carnosine(out) + n H(+)(out) = carnosine(in) + n H(+)(in)</text>
        <dbReference type="Rhea" id="RHEA:76383"/>
        <dbReference type="ChEBI" id="CHEBI:15378"/>
        <dbReference type="ChEBI" id="CHEBI:57485"/>
    </reaction>
    <physiologicalReaction direction="left-to-right" evidence="2">
        <dbReference type="Rhea" id="RHEA:76384"/>
    </physiologicalReaction>
</comment>
<comment type="catalytic activity">
    <reaction evidence="5">
        <text>L-histidine(out) + n H(+)(out) = L-histidine(in) + n H(+)(in)</text>
        <dbReference type="Rhea" id="RHEA:76379"/>
        <dbReference type="ChEBI" id="CHEBI:15378"/>
        <dbReference type="ChEBI" id="CHEBI:57595"/>
    </reaction>
    <physiologicalReaction direction="left-to-right" evidence="8">
        <dbReference type="Rhea" id="RHEA:76380"/>
    </physiologicalReaction>
</comment>
<comment type="subcellular location">
    <subcellularLocation>
        <location evidence="5">Lysosome membrane</location>
        <topology evidence="3">Multi-pass membrane protein</topology>
    </subcellularLocation>
    <subcellularLocation>
        <location evidence="1">Endosome membrane</location>
        <topology evidence="3">Multi-pass membrane protein</topology>
    </subcellularLocation>
</comment>
<comment type="tissue specificity">
    <text evidence="5">Abundant expression in lung, spleen and thymus, and detected faintly in brain, liver, adrenal gland and heart at protein level.</text>
</comment>
<comment type="similarity">
    <text evidence="7">Belongs to the major facilitator superfamily. Proton-dependent oligopeptide transporter (POT/PTR) (TC 2.A.17) family.</text>
</comment>